<protein>
    <recommendedName>
        <fullName>Long-chain-fatty-acid--CoA ligase FadD15</fullName>
        <shortName>FACL</shortName>
        <ecNumber evidence="1">6.2.1.3</ecNumber>
    </recommendedName>
    <alternativeName>
        <fullName>Acyl-CoA synthetase</fullName>
    </alternativeName>
</protein>
<comment type="function">
    <text evidence="1">Catalyzes the activation of long-chain fatty acids as acyl-coenzyme A (acyl-CoA), which are then transferred to the multifunctional polyketide synthase (PKS) type III for further chain extension.</text>
</comment>
<comment type="catalytic activity">
    <reaction evidence="1">
        <text>a long-chain fatty acid + ATP + CoA = a long-chain fatty acyl-CoA + AMP + diphosphate</text>
        <dbReference type="Rhea" id="RHEA:15421"/>
        <dbReference type="ChEBI" id="CHEBI:30616"/>
        <dbReference type="ChEBI" id="CHEBI:33019"/>
        <dbReference type="ChEBI" id="CHEBI:57287"/>
        <dbReference type="ChEBI" id="CHEBI:57560"/>
        <dbReference type="ChEBI" id="CHEBI:83139"/>
        <dbReference type="ChEBI" id="CHEBI:456215"/>
        <dbReference type="EC" id="6.2.1.3"/>
    </reaction>
    <physiologicalReaction direction="left-to-right" evidence="1">
        <dbReference type="Rhea" id="RHEA:15422"/>
    </physiologicalReaction>
</comment>
<comment type="pathway">
    <text evidence="1">Lipid metabolism; fatty acid biosynthesis.</text>
</comment>
<comment type="similarity">
    <text evidence="2">Belongs to the ATP-dependent AMP-binding enzyme family.</text>
</comment>
<comment type="sequence caution" evidence="2">
    <conflict type="frameshift">
        <sequence resource="EMBL-CDS" id="SIU00818"/>
    </conflict>
</comment>
<name>FAC15_MYCBO</name>
<sequence>MREISVPAPFTVGEHDNVAAMVFEHERDDPDYVIYQRLIDGVWTDVTCAEAANQIRAAALGLISLGVQAGDRVVIFSATRYEWAILDFAILAVGAVTVPIYETSSAEQVRWVLQDSEAVVLFAETDSHATMVAELSGSVPALREVLQIAGSGPNALDRLTEAGASVDPAELTARLAALRSTDPATLIYTSGTTGRPKGCQLTQSNLVHEIKGARAYHPTLLRKGERLLVFLPLAHVLARAISMAAFHSKVTVGFTSDIKNLLPMLAVFKPTVVVSVPRVFEKVYNTAEQNAANAGKGRIFAIAAQTAVDWSEACDRGGPGLLLRAKHAVFDRLVYRKLRAALGGNCRAAVSGGAPLGARLGHFYRGAGLTIYEGYGLSETSGGVAISQFNDLKIGTVGKPVPGNSLRIADDGELLVRGGVVFSGYWRNEQATTEAFTDGWFKTGDLGAVDEDGFLTITGRKKEIIVTAGGKNVAPAVLEDQLRAHPLISQAVVVGDAKPFIGALITIDPEAFEGWKQRNSKTAGASVGDLATDPDLIAEIDAAVKQANLAVSHAESIRKFRILPVDFTEDTGELTPTMKVKRKVVAEKFASDIEAIYNKE</sequence>
<reference key="1">
    <citation type="journal article" date="2003" name="Proc. Natl. Acad. Sci. U.S.A.">
        <title>The complete genome sequence of Mycobacterium bovis.</title>
        <authorList>
            <person name="Garnier T."/>
            <person name="Eiglmeier K."/>
            <person name="Camus J.-C."/>
            <person name="Medina N."/>
            <person name="Mansoor H."/>
            <person name="Pryor M."/>
            <person name="Duthoy S."/>
            <person name="Grondin S."/>
            <person name="Lacroix C."/>
            <person name="Monsempe C."/>
            <person name="Simon S."/>
            <person name="Harris B."/>
            <person name="Atkin R."/>
            <person name="Doggett J."/>
            <person name="Mayes R."/>
            <person name="Keating L."/>
            <person name="Wheeler P.R."/>
            <person name="Parkhill J."/>
            <person name="Barrell B.G."/>
            <person name="Cole S.T."/>
            <person name="Gordon S.V."/>
            <person name="Hewinson R.G."/>
        </authorList>
    </citation>
    <scope>NUCLEOTIDE SEQUENCE [LARGE SCALE GENOMIC DNA]</scope>
    <source>
        <strain>ATCC BAA-935 / AF2122/97</strain>
    </source>
</reference>
<reference key="2">
    <citation type="journal article" date="2017" name="Genome Announc.">
        <title>Updated reference genome sequence and annotation of Mycobacterium bovis AF2122/97.</title>
        <authorList>
            <person name="Malone K.M."/>
            <person name="Farrell D."/>
            <person name="Stuber T.P."/>
            <person name="Schubert O.T."/>
            <person name="Aebersold R."/>
            <person name="Robbe-Austerman S."/>
            <person name="Gordon S.V."/>
        </authorList>
    </citation>
    <scope>NUCLEOTIDE SEQUENCE [LARGE SCALE GENOMIC DNA]</scope>
    <scope>GENOME REANNOTATION</scope>
    <source>
        <strain>ATCC BAA-935 / AF2122/97</strain>
    </source>
</reference>
<proteinExistence type="inferred from homology"/>
<accession>Q7TYX8</accession>
<accession>A0A1R3Y0F3</accession>
<accession>X2BK09</accession>
<feature type="chain" id="PRO_0000406785" description="Long-chain-fatty-acid--CoA ligase FadD15">
    <location>
        <begin position="1"/>
        <end position="600"/>
    </location>
</feature>
<organism>
    <name type="scientific">Mycobacterium bovis (strain ATCC BAA-935 / AF2122/97)</name>
    <dbReference type="NCBI Taxonomy" id="233413"/>
    <lineage>
        <taxon>Bacteria</taxon>
        <taxon>Bacillati</taxon>
        <taxon>Actinomycetota</taxon>
        <taxon>Actinomycetes</taxon>
        <taxon>Mycobacteriales</taxon>
        <taxon>Mycobacteriaceae</taxon>
        <taxon>Mycobacterium</taxon>
        <taxon>Mycobacterium tuberculosis complex</taxon>
    </lineage>
</organism>
<dbReference type="EC" id="6.2.1.3" evidence="1"/>
<dbReference type="EMBL" id="LT708304">
    <property type="protein sequence ID" value="SIU00818.1"/>
    <property type="status" value="ALT_FRAME"/>
    <property type="molecule type" value="Genomic_DNA"/>
</dbReference>
<dbReference type="SMR" id="Q7TYX8"/>
<dbReference type="KEGG" id="mbo:BQ2027_MB2210"/>
<dbReference type="PATRIC" id="fig|233413.5.peg.2425"/>
<dbReference type="UniPathway" id="UPA00094"/>
<dbReference type="Proteomes" id="UP000001419">
    <property type="component" value="Chromosome"/>
</dbReference>
<dbReference type="GO" id="GO:0016020">
    <property type="term" value="C:membrane"/>
    <property type="evidence" value="ECO:0007669"/>
    <property type="project" value="TreeGrafter"/>
</dbReference>
<dbReference type="GO" id="GO:0005524">
    <property type="term" value="F:ATP binding"/>
    <property type="evidence" value="ECO:0007669"/>
    <property type="project" value="UniProtKB-KW"/>
</dbReference>
<dbReference type="GO" id="GO:0004467">
    <property type="term" value="F:long-chain fatty acid-CoA ligase activity"/>
    <property type="evidence" value="ECO:0007669"/>
    <property type="project" value="UniProtKB-EC"/>
</dbReference>
<dbReference type="GO" id="GO:0006633">
    <property type="term" value="P:fatty acid biosynthetic process"/>
    <property type="evidence" value="ECO:0007669"/>
    <property type="project" value="UniProtKB-UniPathway"/>
</dbReference>
<dbReference type="CDD" id="cd05907">
    <property type="entry name" value="VL_LC_FACS_like"/>
    <property type="match status" value="1"/>
</dbReference>
<dbReference type="Gene3D" id="3.30.300.30">
    <property type="match status" value="1"/>
</dbReference>
<dbReference type="Gene3D" id="3.40.50.12780">
    <property type="entry name" value="N-terminal domain of ligase-like"/>
    <property type="match status" value="1"/>
</dbReference>
<dbReference type="InterPro" id="IPR045851">
    <property type="entry name" value="AMP-bd_C_sf"/>
</dbReference>
<dbReference type="InterPro" id="IPR020845">
    <property type="entry name" value="AMP-binding_CS"/>
</dbReference>
<dbReference type="InterPro" id="IPR000873">
    <property type="entry name" value="AMP-dep_synth/lig_dom"/>
</dbReference>
<dbReference type="InterPro" id="IPR042099">
    <property type="entry name" value="ANL_N_sf"/>
</dbReference>
<dbReference type="PANTHER" id="PTHR43272:SF32">
    <property type="entry name" value="AMP-DEPENDENT SYNTHETASE_LIGASE DOMAIN-CONTAINING PROTEIN"/>
    <property type="match status" value="1"/>
</dbReference>
<dbReference type="PANTHER" id="PTHR43272">
    <property type="entry name" value="LONG-CHAIN-FATTY-ACID--COA LIGASE"/>
    <property type="match status" value="1"/>
</dbReference>
<dbReference type="Pfam" id="PF00501">
    <property type="entry name" value="AMP-binding"/>
    <property type="match status" value="1"/>
</dbReference>
<dbReference type="Pfam" id="PF23562">
    <property type="entry name" value="AMP-binding_C_3"/>
    <property type="match status" value="1"/>
</dbReference>
<dbReference type="SUPFAM" id="SSF56801">
    <property type="entry name" value="Acetyl-CoA synthetase-like"/>
    <property type="match status" value="1"/>
</dbReference>
<dbReference type="PROSITE" id="PS00455">
    <property type="entry name" value="AMP_BINDING"/>
    <property type="match status" value="1"/>
</dbReference>
<keyword id="KW-0067">ATP-binding</keyword>
<keyword id="KW-0276">Fatty acid metabolism</keyword>
<keyword id="KW-0436">Ligase</keyword>
<keyword id="KW-0443">Lipid metabolism</keyword>
<keyword id="KW-0547">Nucleotide-binding</keyword>
<keyword id="KW-1185">Reference proteome</keyword>
<gene>
    <name type="primary">fadD15</name>
    <name type="ordered locus">BQ2027_MB2210</name>
</gene>
<evidence type="ECO:0000250" key="1">
    <source>
        <dbReference type="UniProtKB" id="O53521"/>
    </source>
</evidence>
<evidence type="ECO:0000305" key="2"/>